<comment type="catalytic activity">
    <reaction>
        <text>5-phospho-beta-D-ribosylamine + L-glutamate + diphosphate = 5-phospho-alpha-D-ribose 1-diphosphate + L-glutamine + H2O</text>
        <dbReference type="Rhea" id="RHEA:14905"/>
        <dbReference type="ChEBI" id="CHEBI:15377"/>
        <dbReference type="ChEBI" id="CHEBI:29985"/>
        <dbReference type="ChEBI" id="CHEBI:33019"/>
        <dbReference type="ChEBI" id="CHEBI:58017"/>
        <dbReference type="ChEBI" id="CHEBI:58359"/>
        <dbReference type="ChEBI" id="CHEBI:58681"/>
        <dbReference type="EC" id="2.4.2.14"/>
    </reaction>
</comment>
<comment type="cofactor">
    <cofactor evidence="1">
        <name>Mg(2+)</name>
        <dbReference type="ChEBI" id="CHEBI:18420"/>
    </cofactor>
    <text evidence="1">Binds 1 Mg(2+) ion per subunit.</text>
</comment>
<comment type="cofactor">
    <cofactor evidence="1">
        <name>[4Fe-4S] cluster</name>
        <dbReference type="ChEBI" id="CHEBI:49883"/>
    </cofactor>
    <text evidence="1">Binds 1 [4Fe-4S] cluster per subunit.</text>
</comment>
<comment type="pathway">
    <text>Purine metabolism; IMP biosynthesis via de novo pathway; N(1)-(5-phospho-D-ribosyl)glycinamide from 5-phospho-alpha-D-ribose 1-diphosphate: step 1/2.</text>
</comment>
<comment type="subcellular location">
    <subcellularLocation>
        <location>Plastid</location>
        <location>Chloroplast</location>
    </subcellularLocation>
</comment>
<comment type="similarity">
    <text evidence="5">In the C-terminal section; belongs to the purine/pyrimidine phosphoribosyltransferase family.</text>
</comment>
<evidence type="ECO:0000250" key="1"/>
<evidence type="ECO:0000255" key="2"/>
<evidence type="ECO:0000255" key="3">
    <source>
        <dbReference type="PROSITE-ProRule" id="PRU00609"/>
    </source>
</evidence>
<evidence type="ECO:0000256" key="4">
    <source>
        <dbReference type="SAM" id="MobiDB-lite"/>
    </source>
</evidence>
<evidence type="ECO:0000305" key="5"/>
<keyword id="KW-0004">4Fe-4S</keyword>
<keyword id="KW-0150">Chloroplast</keyword>
<keyword id="KW-0315">Glutamine amidotransferase</keyword>
<keyword id="KW-0328">Glycosyltransferase</keyword>
<keyword id="KW-0408">Iron</keyword>
<keyword id="KW-0411">Iron-sulfur</keyword>
<keyword id="KW-0460">Magnesium</keyword>
<keyword id="KW-0479">Metal-binding</keyword>
<keyword id="KW-0934">Plastid</keyword>
<keyword id="KW-0658">Purine biosynthesis</keyword>
<keyword id="KW-1185">Reference proteome</keyword>
<keyword id="KW-0808">Transferase</keyword>
<keyword id="KW-0809">Transit peptide</keyword>
<proteinExistence type="evidence at transcript level"/>
<reference key="1">
    <citation type="journal article" date="1995" name="Plant J.">
        <title>Control of de novo purine biosynthesis genes in ureide-producing legumes: induction of glutamine phosphoribosylpyrophosphate amidotransferase gene and characterization of its cDNA from soybean and Vigna.</title>
        <authorList>
            <person name="Kim J.H."/>
            <person name="Delauney A.J."/>
            <person name="Verma D.P.S."/>
        </authorList>
    </citation>
    <scope>NUCLEOTIDE SEQUENCE [MRNA]</scope>
    <source>
        <strain>cv. Prize</strain>
        <tissue>Root nodule</tissue>
    </source>
</reference>
<feature type="transit peptide" description="Chloroplast" evidence="2">
    <location>
        <begin position="1"/>
        <end position="80"/>
    </location>
</feature>
<feature type="chain" id="PRO_0000029289" description="Amidophosphoribosyltransferase, chloroplastic">
    <location>
        <begin position="81"/>
        <end position="569"/>
    </location>
</feature>
<feature type="domain" description="Glutamine amidotransferase type-2" evidence="3">
    <location>
        <begin position="81"/>
        <end position="301"/>
    </location>
</feature>
<feature type="region of interest" description="Disordered" evidence="4">
    <location>
        <begin position="1"/>
        <end position="51"/>
    </location>
</feature>
<feature type="compositionally biased region" description="Low complexity" evidence="4">
    <location>
        <begin position="1"/>
        <end position="21"/>
    </location>
</feature>
<feature type="compositionally biased region" description="Polar residues" evidence="4">
    <location>
        <begin position="22"/>
        <end position="45"/>
    </location>
</feature>
<feature type="active site" description="Nucleophile" evidence="3">
    <location>
        <position position="81"/>
    </location>
</feature>
<feature type="binding site" evidence="1">
    <location>
        <position position="317"/>
    </location>
    <ligand>
        <name>[4Fe-4S] cluster</name>
        <dbReference type="ChEBI" id="CHEBI:49883"/>
    </ligand>
</feature>
<feature type="binding site" evidence="1">
    <location>
        <position position="364"/>
    </location>
    <ligand>
        <name>Mg(2+)</name>
        <dbReference type="ChEBI" id="CHEBI:18420"/>
    </ligand>
</feature>
<feature type="binding site" evidence="1">
    <location>
        <position position="426"/>
    </location>
    <ligand>
        <name>Mg(2+)</name>
        <dbReference type="ChEBI" id="CHEBI:18420"/>
    </ligand>
</feature>
<feature type="binding site" evidence="1">
    <location>
        <position position="427"/>
    </location>
    <ligand>
        <name>Mg(2+)</name>
        <dbReference type="ChEBI" id="CHEBI:18420"/>
    </ligand>
</feature>
<feature type="binding site" evidence="1">
    <location>
        <position position="463"/>
    </location>
    <ligand>
        <name>[4Fe-4S] cluster</name>
        <dbReference type="ChEBI" id="CHEBI:49883"/>
    </ligand>
</feature>
<feature type="binding site" evidence="1">
    <location>
        <position position="514"/>
    </location>
    <ligand>
        <name>[4Fe-4S] cluster</name>
        <dbReference type="ChEBI" id="CHEBI:49883"/>
    </ligand>
</feature>
<feature type="binding site" evidence="1">
    <location>
        <position position="517"/>
    </location>
    <ligand>
        <name>[4Fe-4S] cluster</name>
        <dbReference type="ChEBI" id="CHEBI:49883"/>
    </ligand>
</feature>
<organism>
    <name type="scientific">Glycine max</name>
    <name type="common">Soybean</name>
    <name type="synonym">Glycine hispida</name>
    <dbReference type="NCBI Taxonomy" id="3847"/>
    <lineage>
        <taxon>Eukaryota</taxon>
        <taxon>Viridiplantae</taxon>
        <taxon>Streptophyta</taxon>
        <taxon>Embryophyta</taxon>
        <taxon>Tracheophyta</taxon>
        <taxon>Spermatophyta</taxon>
        <taxon>Magnoliopsida</taxon>
        <taxon>eudicotyledons</taxon>
        <taxon>Gunneridae</taxon>
        <taxon>Pentapetalae</taxon>
        <taxon>rosids</taxon>
        <taxon>fabids</taxon>
        <taxon>Fabales</taxon>
        <taxon>Fabaceae</taxon>
        <taxon>Papilionoideae</taxon>
        <taxon>50 kb inversion clade</taxon>
        <taxon>NPAAA clade</taxon>
        <taxon>indigoferoid/millettioid clade</taxon>
        <taxon>Phaseoleae</taxon>
        <taxon>Glycine</taxon>
        <taxon>Glycine subgen. Soja</taxon>
    </lineage>
</organism>
<gene>
    <name type="primary">PUR1</name>
</gene>
<sequence>MAAASNLSTLSSSSLSKPSSSFPFRNTPTNNNASFLHNKSLPNQNSLSHKLSSPLPLACNPKNQNTCVFFDDEDQKPREECGVVGIYGDPEASRLCSLALHALQHRGQEGAGIVAVHDNHLQSVTGVGLVSDVFEQSKLSRLPGTSAIGHVRYSTAGQSMLKNVQPFLADYRFAAVAVAHNGNFVNYRSLRARLEHNNGSIFNTTSDTEVVLHLIATSKHRPFLLRIVDACEHLQGAYSLVFVTEDKLVAVRDPFGFRPLVMGRRTNGAVVLASETCALDLIEATYEREVYPGEVIVVDHTGIQSLCLVSHPEPKQCIFEHIYFALPNSVVFGRSVYESRKKFGEILASESPVECDVVIAVPDSGVVAALGYAAKAGVPFQQGLIRSHYVGRTFIEPSQKIRDFGVKLKLSPVHAVLEGKRVVVVDDSIVRGTTSSKIVRLLKEAGAKEVHMRIACPPIVASCYYGVDTPSSEELISNRMSVEEIRKFIGSDSLAFLPLDKLKTLLGDDALNYCYACFSGKYPVEPEELQMKRLGVAHFNWDDDFNGNFESIDVGGWVTNQDGFKIGSV</sequence>
<dbReference type="EC" id="2.4.2.14"/>
<dbReference type="EMBL" id="L23833">
    <property type="protein sequence ID" value="AAA73943.1"/>
    <property type="molecule type" value="mRNA"/>
</dbReference>
<dbReference type="PIR" id="T07158">
    <property type="entry name" value="T07158"/>
</dbReference>
<dbReference type="RefSeq" id="NP_001238270.1">
    <property type="nucleotide sequence ID" value="NM_001251341.1"/>
</dbReference>
<dbReference type="SMR" id="P52418"/>
<dbReference type="STRING" id="3847.P52418"/>
<dbReference type="MEROPS" id="C44.001"/>
<dbReference type="PaxDb" id="3847-GLYMA04G00930.1"/>
<dbReference type="ProMEX" id="P52418"/>
<dbReference type="GeneID" id="548065"/>
<dbReference type="KEGG" id="gmx:548065"/>
<dbReference type="eggNOG" id="KOG0572">
    <property type="taxonomic scope" value="Eukaryota"/>
</dbReference>
<dbReference type="InParanoid" id="P52418"/>
<dbReference type="OrthoDB" id="191723at2759"/>
<dbReference type="SABIO-RK" id="P52418"/>
<dbReference type="UniPathway" id="UPA00074">
    <property type="reaction ID" value="UER00124"/>
</dbReference>
<dbReference type="Proteomes" id="UP000008827">
    <property type="component" value="Unplaced"/>
</dbReference>
<dbReference type="GO" id="GO:0009507">
    <property type="term" value="C:chloroplast"/>
    <property type="evidence" value="ECO:0007669"/>
    <property type="project" value="UniProtKB-SubCell"/>
</dbReference>
<dbReference type="GO" id="GO:0005737">
    <property type="term" value="C:cytoplasm"/>
    <property type="evidence" value="ECO:0000318"/>
    <property type="project" value="GO_Central"/>
</dbReference>
<dbReference type="GO" id="GO:0051539">
    <property type="term" value="F:4 iron, 4 sulfur cluster binding"/>
    <property type="evidence" value="ECO:0007669"/>
    <property type="project" value="UniProtKB-KW"/>
</dbReference>
<dbReference type="GO" id="GO:0004044">
    <property type="term" value="F:amidophosphoribosyltransferase activity"/>
    <property type="evidence" value="ECO:0000318"/>
    <property type="project" value="GO_Central"/>
</dbReference>
<dbReference type="GO" id="GO:0046872">
    <property type="term" value="F:metal ion binding"/>
    <property type="evidence" value="ECO:0007669"/>
    <property type="project" value="UniProtKB-KW"/>
</dbReference>
<dbReference type="GO" id="GO:0006189">
    <property type="term" value="P:'de novo' IMP biosynthetic process"/>
    <property type="evidence" value="ECO:0007669"/>
    <property type="project" value="UniProtKB-UniPathway"/>
</dbReference>
<dbReference type="GO" id="GO:0009113">
    <property type="term" value="P:purine nucleobase biosynthetic process"/>
    <property type="evidence" value="ECO:0007669"/>
    <property type="project" value="InterPro"/>
</dbReference>
<dbReference type="GO" id="GO:0006164">
    <property type="term" value="P:purine nucleotide biosynthetic process"/>
    <property type="evidence" value="ECO:0000318"/>
    <property type="project" value="GO_Central"/>
</dbReference>
<dbReference type="CDD" id="cd00715">
    <property type="entry name" value="GPATase_N"/>
    <property type="match status" value="1"/>
</dbReference>
<dbReference type="CDD" id="cd06223">
    <property type="entry name" value="PRTases_typeI"/>
    <property type="match status" value="1"/>
</dbReference>
<dbReference type="Gene3D" id="3.40.50.2020">
    <property type="match status" value="1"/>
</dbReference>
<dbReference type="Gene3D" id="3.60.20.10">
    <property type="entry name" value="Glutamine Phosphoribosylpyrophosphate, subunit 1, domain 1"/>
    <property type="match status" value="1"/>
</dbReference>
<dbReference type="HAMAP" id="MF_01931">
    <property type="entry name" value="PurF"/>
    <property type="match status" value="1"/>
</dbReference>
<dbReference type="InterPro" id="IPR017932">
    <property type="entry name" value="GATase_2_dom"/>
</dbReference>
<dbReference type="InterPro" id="IPR029055">
    <property type="entry name" value="Ntn_hydrolases_N"/>
</dbReference>
<dbReference type="InterPro" id="IPR000836">
    <property type="entry name" value="PRibTrfase_dom"/>
</dbReference>
<dbReference type="InterPro" id="IPR029057">
    <property type="entry name" value="PRTase-like"/>
</dbReference>
<dbReference type="InterPro" id="IPR005854">
    <property type="entry name" value="PurF"/>
</dbReference>
<dbReference type="InterPro" id="IPR035584">
    <property type="entry name" value="PurF_N"/>
</dbReference>
<dbReference type="NCBIfam" id="TIGR01134">
    <property type="entry name" value="purF"/>
    <property type="match status" value="1"/>
</dbReference>
<dbReference type="PANTHER" id="PTHR11907">
    <property type="entry name" value="AMIDOPHOSPHORIBOSYLTRANSFERASE"/>
    <property type="match status" value="1"/>
</dbReference>
<dbReference type="Pfam" id="PF13537">
    <property type="entry name" value="GATase_7"/>
    <property type="match status" value="1"/>
</dbReference>
<dbReference type="Pfam" id="PF00156">
    <property type="entry name" value="Pribosyltran"/>
    <property type="match status" value="1"/>
</dbReference>
<dbReference type="SUPFAM" id="SSF56235">
    <property type="entry name" value="N-terminal nucleophile aminohydrolases (Ntn hydrolases)"/>
    <property type="match status" value="1"/>
</dbReference>
<dbReference type="SUPFAM" id="SSF53271">
    <property type="entry name" value="PRTase-like"/>
    <property type="match status" value="1"/>
</dbReference>
<dbReference type="PROSITE" id="PS51278">
    <property type="entry name" value="GATASE_TYPE_2"/>
    <property type="match status" value="1"/>
</dbReference>
<dbReference type="PROSITE" id="PS00103">
    <property type="entry name" value="PUR_PYR_PR_TRANSFER"/>
    <property type="match status" value="1"/>
</dbReference>
<protein>
    <recommendedName>
        <fullName>Amidophosphoribosyltransferase, chloroplastic</fullName>
        <shortName>ATase</shortName>
        <ecNumber>2.4.2.14</ecNumber>
    </recommendedName>
    <alternativeName>
        <fullName>Glutamine phosphoribosylpyrophosphate amidotransferase</fullName>
        <shortName>GPAT</shortName>
    </alternativeName>
</protein>
<name>PUR1_SOYBN</name>
<accession>P52418</accession>